<comment type="function">
    <text evidence="1">Sigma factors are initiation factors that promote the attachment of RNA polymerase to specific initiation sites and are then released. Sigma-S contributes to the protection against external stress, thus playing a role in cellular fitness and survival (By similarity).</text>
</comment>
<comment type="similarity">
    <text evidence="2">Belongs to the sigma-70 factor family.</text>
</comment>
<organism>
    <name type="scientific">Staphylococcus aureus (strain MRSA252)</name>
    <dbReference type="NCBI Taxonomy" id="282458"/>
    <lineage>
        <taxon>Bacteria</taxon>
        <taxon>Bacillati</taxon>
        <taxon>Bacillota</taxon>
        <taxon>Bacilli</taxon>
        <taxon>Bacillales</taxon>
        <taxon>Staphylococcaceae</taxon>
        <taxon>Staphylococcus</taxon>
    </lineage>
</organism>
<gene>
    <name type="primary">sigS</name>
    <name type="ordered locus">SAR1859</name>
</gene>
<accession>Q6GFS7</accession>
<protein>
    <recommendedName>
        <fullName>RNA polymerase sigma factor SigS</fullName>
    </recommendedName>
</protein>
<feature type="chain" id="PRO_0000367448" description="RNA polymerase sigma factor SigS">
    <location>
        <begin position="1"/>
        <end position="156"/>
    </location>
</feature>
<feature type="DNA-binding region" description="H-T-H motif" evidence="1">
    <location>
        <begin position="126"/>
        <end position="145"/>
    </location>
</feature>
<feature type="short sequence motif" description="Polymerase core binding">
    <location>
        <begin position="29"/>
        <end position="44"/>
    </location>
</feature>
<name>SIGS_STAAR</name>
<sequence length="156" mass="19163">MKFNDVYNKHHKIIHHLLKKYNISYNYDEYYQLLLIKMWQLSQIYKPSSNQSLSSFLFMRLNFYLIDLFRQQKRLNDIILCENHSPILTEQPTYFNEYDLRLQDVCALLNHRERQWLMLYLEGYKQYEIADIMSLSTSTIKLIKASVKRKCQRFFK</sequence>
<evidence type="ECO:0000250" key="1"/>
<evidence type="ECO:0000305" key="2"/>
<proteinExistence type="inferred from homology"/>
<dbReference type="EMBL" id="BX571856">
    <property type="protein sequence ID" value="CAG40850.1"/>
    <property type="molecule type" value="Genomic_DNA"/>
</dbReference>
<dbReference type="RefSeq" id="WP_000671059.1">
    <property type="nucleotide sequence ID" value="NC_002952.2"/>
</dbReference>
<dbReference type="SMR" id="Q6GFS7"/>
<dbReference type="KEGG" id="sar:SAR1859"/>
<dbReference type="HOGENOM" id="CLU_047691_20_2_9"/>
<dbReference type="Proteomes" id="UP000000596">
    <property type="component" value="Chromosome"/>
</dbReference>
<dbReference type="GO" id="GO:0003677">
    <property type="term" value="F:DNA binding"/>
    <property type="evidence" value="ECO:0007669"/>
    <property type="project" value="UniProtKB-KW"/>
</dbReference>
<dbReference type="GO" id="GO:0016987">
    <property type="term" value="F:sigma factor activity"/>
    <property type="evidence" value="ECO:0007669"/>
    <property type="project" value="UniProtKB-KW"/>
</dbReference>
<dbReference type="GO" id="GO:0006352">
    <property type="term" value="P:DNA-templated transcription initiation"/>
    <property type="evidence" value="ECO:0007669"/>
    <property type="project" value="InterPro"/>
</dbReference>
<dbReference type="Gene3D" id="1.10.10.10">
    <property type="entry name" value="Winged helix-like DNA-binding domain superfamily/Winged helix DNA-binding domain"/>
    <property type="match status" value="1"/>
</dbReference>
<dbReference type="InterPro" id="IPR014284">
    <property type="entry name" value="RNA_pol_sigma-70_dom"/>
</dbReference>
<dbReference type="InterPro" id="IPR007627">
    <property type="entry name" value="RNA_pol_sigma70_r2"/>
</dbReference>
<dbReference type="InterPro" id="IPR013325">
    <property type="entry name" value="RNA_pol_sigma_r2"/>
</dbReference>
<dbReference type="InterPro" id="IPR016032">
    <property type="entry name" value="Sig_transdc_resp-reg_C-effctor"/>
</dbReference>
<dbReference type="InterPro" id="IPR000792">
    <property type="entry name" value="Tscrpt_reg_LuxR_C"/>
</dbReference>
<dbReference type="InterPro" id="IPR036388">
    <property type="entry name" value="WH-like_DNA-bd_sf"/>
</dbReference>
<dbReference type="NCBIfam" id="TIGR02937">
    <property type="entry name" value="sigma70-ECF"/>
    <property type="match status" value="1"/>
</dbReference>
<dbReference type="Pfam" id="PF00196">
    <property type="entry name" value="GerE"/>
    <property type="match status" value="1"/>
</dbReference>
<dbReference type="Pfam" id="PF04542">
    <property type="entry name" value="Sigma70_r2"/>
    <property type="match status" value="1"/>
</dbReference>
<dbReference type="PRINTS" id="PR00038">
    <property type="entry name" value="HTHLUXR"/>
</dbReference>
<dbReference type="SUPFAM" id="SSF46894">
    <property type="entry name" value="C-terminal effector domain of the bipartite response regulators"/>
    <property type="match status" value="1"/>
</dbReference>
<dbReference type="SUPFAM" id="SSF88946">
    <property type="entry name" value="Sigma2 domain of RNA polymerase sigma factors"/>
    <property type="match status" value="1"/>
</dbReference>
<keyword id="KW-0238">DNA-binding</keyword>
<keyword id="KW-0731">Sigma factor</keyword>
<keyword id="KW-0804">Transcription</keyword>
<keyword id="KW-0805">Transcription regulation</keyword>
<reference key="1">
    <citation type="journal article" date="2004" name="Proc. Natl. Acad. Sci. U.S.A.">
        <title>Complete genomes of two clinical Staphylococcus aureus strains: evidence for the rapid evolution of virulence and drug resistance.</title>
        <authorList>
            <person name="Holden M.T.G."/>
            <person name="Feil E.J."/>
            <person name="Lindsay J.A."/>
            <person name="Peacock S.J."/>
            <person name="Day N.P.J."/>
            <person name="Enright M.C."/>
            <person name="Foster T.J."/>
            <person name="Moore C.E."/>
            <person name="Hurst L."/>
            <person name="Atkin R."/>
            <person name="Barron A."/>
            <person name="Bason N."/>
            <person name="Bentley S.D."/>
            <person name="Chillingworth C."/>
            <person name="Chillingworth T."/>
            <person name="Churcher C."/>
            <person name="Clark L."/>
            <person name="Corton C."/>
            <person name="Cronin A."/>
            <person name="Doggett J."/>
            <person name="Dowd L."/>
            <person name="Feltwell T."/>
            <person name="Hance Z."/>
            <person name="Harris B."/>
            <person name="Hauser H."/>
            <person name="Holroyd S."/>
            <person name="Jagels K."/>
            <person name="James K.D."/>
            <person name="Lennard N."/>
            <person name="Line A."/>
            <person name="Mayes R."/>
            <person name="Moule S."/>
            <person name="Mungall K."/>
            <person name="Ormond D."/>
            <person name="Quail M.A."/>
            <person name="Rabbinowitsch E."/>
            <person name="Rutherford K.M."/>
            <person name="Sanders M."/>
            <person name="Sharp S."/>
            <person name="Simmonds M."/>
            <person name="Stevens K."/>
            <person name="Whitehead S."/>
            <person name="Barrell B.G."/>
            <person name="Spratt B.G."/>
            <person name="Parkhill J."/>
        </authorList>
    </citation>
    <scope>NUCLEOTIDE SEQUENCE [LARGE SCALE GENOMIC DNA]</scope>
    <source>
        <strain>MRSA252</strain>
    </source>
</reference>